<name>PAE10_ARATH</name>
<protein>
    <recommendedName>
        <fullName evidence="6">Pectin acetylesterase 10</fullName>
        <ecNumber evidence="7">3.1.1.-</ecNumber>
    </recommendedName>
</protein>
<gene>
    <name evidence="6" type="primary">PAE10</name>
    <name evidence="8" type="ordered locus">At5g26670</name>
    <name evidence="9" type="ORF">F21E10.11</name>
</gene>
<organism>
    <name type="scientific">Arabidopsis thaliana</name>
    <name type="common">Mouse-ear cress</name>
    <dbReference type="NCBI Taxonomy" id="3702"/>
    <lineage>
        <taxon>Eukaryota</taxon>
        <taxon>Viridiplantae</taxon>
        <taxon>Streptophyta</taxon>
        <taxon>Embryophyta</taxon>
        <taxon>Tracheophyta</taxon>
        <taxon>Spermatophyta</taxon>
        <taxon>Magnoliopsida</taxon>
        <taxon>eudicotyledons</taxon>
        <taxon>Gunneridae</taxon>
        <taxon>Pentapetalae</taxon>
        <taxon>rosids</taxon>
        <taxon>malvids</taxon>
        <taxon>Brassicales</taxon>
        <taxon>Brassicaceae</taxon>
        <taxon>Camelineae</taxon>
        <taxon>Arabidopsis</taxon>
    </lineage>
</organism>
<dbReference type="EC" id="3.1.1.-" evidence="7"/>
<dbReference type="EMBL" id="AF058914">
    <property type="protein sequence ID" value="AAC13595.1"/>
    <property type="status" value="ALT_SEQ"/>
    <property type="molecule type" value="Genomic_DNA"/>
</dbReference>
<dbReference type="EMBL" id="CP002688">
    <property type="protein sequence ID" value="AED93578.1"/>
    <property type="molecule type" value="Genomic_DNA"/>
</dbReference>
<dbReference type="EMBL" id="CP002688">
    <property type="protein sequence ID" value="AED93579.1"/>
    <property type="molecule type" value="Genomic_DNA"/>
</dbReference>
<dbReference type="EMBL" id="CP002688">
    <property type="protein sequence ID" value="ANM69252.1"/>
    <property type="molecule type" value="Genomic_DNA"/>
</dbReference>
<dbReference type="EMBL" id="CP002688">
    <property type="protein sequence ID" value="ANM69253.1"/>
    <property type="molecule type" value="Genomic_DNA"/>
</dbReference>
<dbReference type="EMBL" id="AK317140">
    <property type="protein sequence ID" value="BAH19826.1"/>
    <property type="molecule type" value="mRNA"/>
</dbReference>
<dbReference type="EMBL" id="BT015374">
    <property type="protein sequence ID" value="AAU05497.1"/>
    <property type="molecule type" value="mRNA"/>
</dbReference>
<dbReference type="EMBL" id="BT029367">
    <property type="protein sequence ID" value="ABK32181.1"/>
    <property type="molecule type" value="mRNA"/>
</dbReference>
<dbReference type="EMBL" id="AK228304">
    <property type="protein sequence ID" value="BAF00247.1"/>
    <property type="molecule type" value="mRNA"/>
</dbReference>
<dbReference type="PIR" id="T01197">
    <property type="entry name" value="T01197"/>
</dbReference>
<dbReference type="RefSeq" id="NP_001318657.1">
    <molecule id="Q66GM8-2"/>
    <property type="nucleotide sequence ID" value="NM_001343974.1"/>
</dbReference>
<dbReference type="RefSeq" id="NP_001330948.1">
    <molecule id="Q66GM8-2"/>
    <property type="nucleotide sequence ID" value="NM_001343975.1"/>
</dbReference>
<dbReference type="RefSeq" id="NP_850878.2">
    <molecule id="Q66GM8-1"/>
    <property type="nucleotide sequence ID" value="NM_180547.3"/>
</dbReference>
<dbReference type="RefSeq" id="NP_974837.1">
    <molecule id="Q66GM8-2"/>
    <property type="nucleotide sequence ID" value="NM_203108.2"/>
</dbReference>
<dbReference type="SMR" id="Q66GM8"/>
<dbReference type="FunCoup" id="Q66GM8">
    <property type="interactions" value="53"/>
</dbReference>
<dbReference type="STRING" id="3702.Q66GM8"/>
<dbReference type="ESTHER" id="arath-q66gm8">
    <property type="family name" value="Pectinacetylesterase-Notum"/>
</dbReference>
<dbReference type="GlyCosmos" id="Q66GM8">
    <property type="glycosylation" value="1 site, No reported glycans"/>
</dbReference>
<dbReference type="GlyGen" id="Q66GM8">
    <property type="glycosylation" value="1 site"/>
</dbReference>
<dbReference type="PaxDb" id="3702-AT5G26670.1"/>
<dbReference type="ProteomicsDB" id="226045">
    <molecule id="Q66GM8-1"/>
</dbReference>
<dbReference type="EnsemblPlants" id="AT5G26670.1">
    <molecule id="Q66GM8-1"/>
    <property type="protein sequence ID" value="AT5G26670.1"/>
    <property type="gene ID" value="AT5G26670"/>
</dbReference>
<dbReference type="EnsemblPlants" id="AT5G26670.2">
    <molecule id="Q66GM8-2"/>
    <property type="protein sequence ID" value="AT5G26670.2"/>
    <property type="gene ID" value="AT5G26670"/>
</dbReference>
<dbReference type="EnsemblPlants" id="AT5G26670.3">
    <molecule id="Q66GM8-2"/>
    <property type="protein sequence ID" value="AT5G26670.3"/>
    <property type="gene ID" value="AT5G26670"/>
</dbReference>
<dbReference type="EnsemblPlants" id="AT5G26670.4">
    <molecule id="Q66GM8-2"/>
    <property type="protein sequence ID" value="AT5G26670.4"/>
    <property type="gene ID" value="AT5G26670"/>
</dbReference>
<dbReference type="GeneID" id="832722"/>
<dbReference type="Gramene" id="AT5G26670.1">
    <molecule id="Q66GM8-1"/>
    <property type="protein sequence ID" value="AT5G26670.1"/>
    <property type="gene ID" value="AT5G26670"/>
</dbReference>
<dbReference type="Gramene" id="AT5G26670.2">
    <molecule id="Q66GM8-2"/>
    <property type="protein sequence ID" value="AT5G26670.2"/>
    <property type="gene ID" value="AT5G26670"/>
</dbReference>
<dbReference type="Gramene" id="AT5G26670.3">
    <molecule id="Q66GM8-2"/>
    <property type="protein sequence ID" value="AT5G26670.3"/>
    <property type="gene ID" value="AT5G26670"/>
</dbReference>
<dbReference type="Gramene" id="AT5G26670.4">
    <molecule id="Q66GM8-2"/>
    <property type="protein sequence ID" value="AT5G26670.4"/>
    <property type="gene ID" value="AT5G26670"/>
</dbReference>
<dbReference type="KEGG" id="ath:AT5G26670"/>
<dbReference type="Araport" id="AT5G26670"/>
<dbReference type="TAIR" id="AT5G26670">
    <property type="gene designation" value="ATPAE10"/>
</dbReference>
<dbReference type="eggNOG" id="KOG4287">
    <property type="taxonomic scope" value="Eukaryota"/>
</dbReference>
<dbReference type="InParanoid" id="Q66GM8"/>
<dbReference type="OMA" id="FFYNKTE"/>
<dbReference type="PhylomeDB" id="Q66GM8"/>
<dbReference type="PRO" id="PR:Q66GM8"/>
<dbReference type="Proteomes" id="UP000006548">
    <property type="component" value="Chromosome 5"/>
</dbReference>
<dbReference type="ExpressionAtlas" id="Q66GM8">
    <property type="expression patterns" value="baseline and differential"/>
</dbReference>
<dbReference type="GO" id="GO:0005576">
    <property type="term" value="C:extracellular region"/>
    <property type="evidence" value="ECO:0007669"/>
    <property type="project" value="UniProtKB-KW"/>
</dbReference>
<dbReference type="GO" id="GO:0016787">
    <property type="term" value="F:hydrolase activity"/>
    <property type="evidence" value="ECO:0007669"/>
    <property type="project" value="UniProtKB-KW"/>
</dbReference>
<dbReference type="GO" id="GO:0071555">
    <property type="term" value="P:cell wall organization"/>
    <property type="evidence" value="ECO:0007669"/>
    <property type="project" value="UniProtKB-KW"/>
</dbReference>
<dbReference type="InterPro" id="IPR004963">
    <property type="entry name" value="PAE/NOTUM"/>
</dbReference>
<dbReference type="PANTHER" id="PTHR21562">
    <property type="entry name" value="NOTUM-RELATED"/>
    <property type="match status" value="1"/>
</dbReference>
<dbReference type="PANTHER" id="PTHR21562:SF61">
    <property type="entry name" value="PECTIN ACETYLESTERASE 10"/>
    <property type="match status" value="1"/>
</dbReference>
<dbReference type="Pfam" id="PF03283">
    <property type="entry name" value="PAE"/>
    <property type="match status" value="1"/>
</dbReference>
<sequence length="416" mass="46562">MRKLFLLGFIVAGLVLGNEANGYLEFNVTELDRIEDLEFGFSKFSSNFNPLMVGLTLIRGAGSKGAVCLDGTLPGYHLHRGHGSGANSWLIQLEGGGWCDNIRNCVYRKKSRRGSSNYMEKQIQFTGILSNKAQENPDFFNWNRVKLRYCDGGSFSGDSQNKAARLQFRGEKIWRAAMDDLKAKGMRNAKQALLSGCSAGGLAVILRCDEFRNLFSGWTRVKCLSDAGLFLDTPDVSGGHTIRNLYNGVVQLQGVKNNLPHLCTNHLNPTSCFFPQNLISQMKTPLFIVNAAYDIWQIQSSIAPPSADPSGYWHECRLNHGRCTPAQIRFLQGFRNQMLRAVSGFSNSKKNGLFINSCFAHCQTERQDTWFADDSPVIHKKAVAIAVGDWYFDRAEVKLIDCPYPCDRSCHNLVFR</sequence>
<accession>Q66GM8</accession>
<accession>B9DGF9</accession>
<accession>O65250</accession>
<accession>Q0WRK2</accession>
<feature type="signal peptide" evidence="3">
    <location>
        <begin position="1"/>
        <end position="20"/>
    </location>
</feature>
<feature type="chain" id="PRO_0000431775" description="Pectin acetylesterase 10" evidence="3">
    <location>
        <begin position="21"/>
        <end position="416"/>
    </location>
</feature>
<feature type="active site" description="Charge relay system" evidence="2">
    <location>
        <position position="198"/>
    </location>
</feature>
<feature type="active site" description="Charge relay system" evidence="2">
    <location>
        <position position="294"/>
    </location>
</feature>
<feature type="active site" description="Charge relay system" evidence="2">
    <location>
        <position position="361"/>
    </location>
</feature>
<feature type="glycosylation site" description="N-linked (GlcNAc...) asparagine" evidence="4">
    <location>
        <position position="27"/>
    </location>
</feature>
<feature type="splice variant" id="VSP_057379" description="In isoform 2.">
    <location>
        <begin position="1"/>
        <end position="118"/>
    </location>
</feature>
<feature type="sequence conflict" description="In Ref. 3; BAH19826." evidence="7" ref="3">
    <original>S</original>
    <variation>G</variation>
    <location>
        <position position="156"/>
    </location>
</feature>
<keyword id="KW-0025">Alternative splicing</keyword>
<keyword id="KW-0134">Cell wall</keyword>
<keyword id="KW-0961">Cell wall biogenesis/degradation</keyword>
<keyword id="KW-0325">Glycoprotein</keyword>
<keyword id="KW-0378">Hydrolase</keyword>
<keyword id="KW-1185">Reference proteome</keyword>
<keyword id="KW-0964">Secreted</keyword>
<keyword id="KW-0732">Signal</keyword>
<reference key="1">
    <citation type="journal article" date="2000" name="Nature">
        <title>Sequence and analysis of chromosome 5 of the plant Arabidopsis thaliana.</title>
        <authorList>
            <person name="Tabata S."/>
            <person name="Kaneko T."/>
            <person name="Nakamura Y."/>
            <person name="Kotani H."/>
            <person name="Kato T."/>
            <person name="Asamizu E."/>
            <person name="Miyajima N."/>
            <person name="Sasamoto S."/>
            <person name="Kimura T."/>
            <person name="Hosouchi T."/>
            <person name="Kawashima K."/>
            <person name="Kohara M."/>
            <person name="Matsumoto M."/>
            <person name="Matsuno A."/>
            <person name="Muraki A."/>
            <person name="Nakayama S."/>
            <person name="Nakazaki N."/>
            <person name="Naruo K."/>
            <person name="Okumura S."/>
            <person name="Shinpo S."/>
            <person name="Takeuchi C."/>
            <person name="Wada T."/>
            <person name="Watanabe A."/>
            <person name="Yamada M."/>
            <person name="Yasuda M."/>
            <person name="Sato S."/>
            <person name="de la Bastide M."/>
            <person name="Huang E."/>
            <person name="Spiegel L."/>
            <person name="Gnoj L."/>
            <person name="O'Shaughnessy A."/>
            <person name="Preston R."/>
            <person name="Habermann K."/>
            <person name="Murray J."/>
            <person name="Johnson D."/>
            <person name="Rohlfing T."/>
            <person name="Nelson J."/>
            <person name="Stoneking T."/>
            <person name="Pepin K."/>
            <person name="Spieth J."/>
            <person name="Sekhon M."/>
            <person name="Armstrong J."/>
            <person name="Becker M."/>
            <person name="Belter E."/>
            <person name="Cordum H."/>
            <person name="Cordes M."/>
            <person name="Courtney L."/>
            <person name="Courtney W."/>
            <person name="Dante M."/>
            <person name="Du H."/>
            <person name="Edwards J."/>
            <person name="Fryman J."/>
            <person name="Haakensen B."/>
            <person name="Lamar E."/>
            <person name="Latreille P."/>
            <person name="Leonard S."/>
            <person name="Meyer R."/>
            <person name="Mulvaney E."/>
            <person name="Ozersky P."/>
            <person name="Riley A."/>
            <person name="Strowmatt C."/>
            <person name="Wagner-McPherson C."/>
            <person name="Wollam A."/>
            <person name="Yoakum M."/>
            <person name="Bell M."/>
            <person name="Dedhia N."/>
            <person name="Parnell L."/>
            <person name="Shah R."/>
            <person name="Rodriguez M."/>
            <person name="Hoon See L."/>
            <person name="Vil D."/>
            <person name="Baker J."/>
            <person name="Kirchoff K."/>
            <person name="Toth K."/>
            <person name="King L."/>
            <person name="Bahret A."/>
            <person name="Miller B."/>
            <person name="Marra M.A."/>
            <person name="Martienssen R."/>
            <person name="McCombie W.R."/>
            <person name="Wilson R.K."/>
            <person name="Murphy G."/>
            <person name="Bancroft I."/>
            <person name="Volckaert G."/>
            <person name="Wambutt R."/>
            <person name="Duesterhoeft A."/>
            <person name="Stiekema W."/>
            <person name="Pohl T."/>
            <person name="Entian K.-D."/>
            <person name="Terryn N."/>
            <person name="Hartley N."/>
            <person name="Bent E."/>
            <person name="Johnson S."/>
            <person name="Langham S.-A."/>
            <person name="McCullagh B."/>
            <person name="Robben J."/>
            <person name="Grymonprez B."/>
            <person name="Zimmermann W."/>
            <person name="Ramsperger U."/>
            <person name="Wedler H."/>
            <person name="Balke K."/>
            <person name="Wedler E."/>
            <person name="Peters S."/>
            <person name="van Staveren M."/>
            <person name="Dirkse W."/>
            <person name="Mooijman P."/>
            <person name="Klein Lankhorst R."/>
            <person name="Weitzenegger T."/>
            <person name="Bothe G."/>
            <person name="Rose M."/>
            <person name="Hauf J."/>
            <person name="Berneiser S."/>
            <person name="Hempel S."/>
            <person name="Feldpausch M."/>
            <person name="Lamberth S."/>
            <person name="Villarroel R."/>
            <person name="Gielen J."/>
            <person name="Ardiles W."/>
            <person name="Bents O."/>
            <person name="Lemcke K."/>
            <person name="Kolesov G."/>
            <person name="Mayer K.F.X."/>
            <person name="Rudd S."/>
            <person name="Schoof H."/>
            <person name="Schueller C."/>
            <person name="Zaccaria P."/>
            <person name="Mewes H.-W."/>
            <person name="Bevan M."/>
            <person name="Fransz P.F."/>
        </authorList>
    </citation>
    <scope>NUCLEOTIDE SEQUENCE [LARGE SCALE GENOMIC DNA]</scope>
    <source>
        <strain>cv. Columbia</strain>
    </source>
</reference>
<reference key="2">
    <citation type="journal article" date="2017" name="Plant J.">
        <title>Araport11: a complete reannotation of the Arabidopsis thaliana reference genome.</title>
        <authorList>
            <person name="Cheng C.Y."/>
            <person name="Krishnakumar V."/>
            <person name="Chan A.P."/>
            <person name="Thibaud-Nissen F."/>
            <person name="Schobel S."/>
            <person name="Town C.D."/>
        </authorList>
    </citation>
    <scope>GENOME REANNOTATION</scope>
    <source>
        <strain>cv. Columbia</strain>
    </source>
</reference>
<reference key="3">
    <citation type="journal article" date="2009" name="DNA Res.">
        <title>Analysis of multiple occurrences of alternative splicing events in Arabidopsis thaliana using novel sequenced full-length cDNAs.</title>
        <authorList>
            <person name="Iida K."/>
            <person name="Fukami-Kobayashi K."/>
            <person name="Toyoda A."/>
            <person name="Sakaki Y."/>
            <person name="Kobayashi M."/>
            <person name="Seki M."/>
            <person name="Shinozaki K."/>
        </authorList>
    </citation>
    <scope>NUCLEOTIDE SEQUENCE [LARGE SCALE MRNA] (ISOFORM 1)</scope>
    <source>
        <strain>cv. Columbia</strain>
    </source>
</reference>
<reference key="4">
    <citation type="submission" date="2004-08" db="EMBL/GenBank/DDBJ databases">
        <title>Arabidopsis ORF clones.</title>
        <authorList>
            <person name="Kim C.J."/>
            <person name="Chen H."/>
            <person name="Cheuk R.F."/>
            <person name="Shinn P."/>
            <person name="Ecker J.R."/>
        </authorList>
    </citation>
    <scope>NUCLEOTIDE SEQUENCE [LARGE SCALE MRNA] (ISOFORM 1)</scope>
    <source>
        <strain>cv. Columbia</strain>
    </source>
</reference>
<reference key="5">
    <citation type="submission" date="2006-11" db="EMBL/GenBank/DDBJ databases">
        <title>Arabidopsis ORF clones.</title>
        <authorList>
            <person name="Bautista V.R."/>
            <person name="Kim C.J."/>
            <person name="Chen H."/>
            <person name="Quinitio C."/>
            <person name="Ecker J.R."/>
        </authorList>
    </citation>
    <scope>NUCLEOTIDE SEQUENCE [LARGE SCALE MRNA] (ISOFORM 2)</scope>
    <source>
        <strain>cv. Columbia</strain>
    </source>
</reference>
<reference key="6">
    <citation type="submission" date="2011-02" db="EMBL/GenBank/DDBJ databases">
        <title>Large-scale analysis of RIKEN Arabidopsis full-length (RAFL) cDNAs.</title>
        <authorList>
            <person name="Totoki Y."/>
            <person name="Seki M."/>
            <person name="Ishida J."/>
            <person name="Nakajima M."/>
            <person name="Enju A."/>
            <person name="Kamiya A."/>
            <person name="Narusaka M."/>
            <person name="Shin-i T."/>
            <person name="Nakagawa M."/>
            <person name="Sakamoto N."/>
            <person name="Oishi K."/>
            <person name="Kohara Y."/>
            <person name="Kobayashi M."/>
            <person name="Toyoda A."/>
            <person name="Sakaki Y."/>
            <person name="Sakurai T."/>
            <person name="Iida K."/>
            <person name="Akiyama K."/>
            <person name="Satou M."/>
            <person name="Toyoda T."/>
            <person name="Konagaya A."/>
            <person name="Carninci P."/>
            <person name="Kawai J."/>
            <person name="Hayashizaki Y."/>
            <person name="Shinozaki K."/>
        </authorList>
    </citation>
    <scope>NUCLEOTIDE SEQUENCE [LARGE SCALE MRNA] (ISOFORM 2)</scope>
    <source>
        <strain>cv. Columbia</strain>
    </source>
</reference>
<reference key="7">
    <citation type="journal article" date="2014" name="Planta">
        <title>Identification and functional characterization of the distinct plant pectin esterases PAE8 and PAE9 and their deletion mutants.</title>
        <authorList>
            <person name="de Souza A."/>
            <person name="Hull P.A."/>
            <person name="Gille S."/>
            <person name="Pauly M."/>
        </authorList>
    </citation>
    <scope>GENE FAMILY</scope>
    <scope>DISRUPTION PHENOTYPE</scope>
</reference>
<proteinExistence type="evidence at transcript level"/>
<evidence type="ECO:0000250" key="1">
    <source>
        <dbReference type="UniProtKB" id="B9DFR3"/>
    </source>
</evidence>
<evidence type="ECO:0000250" key="2">
    <source>
        <dbReference type="UniProtKB" id="Q6P988"/>
    </source>
</evidence>
<evidence type="ECO:0000255" key="3"/>
<evidence type="ECO:0000255" key="4">
    <source>
        <dbReference type="PROSITE-ProRule" id="PRU00498"/>
    </source>
</evidence>
<evidence type="ECO:0000269" key="5">
    <source>
    </source>
</evidence>
<evidence type="ECO:0000303" key="6">
    <source>
    </source>
</evidence>
<evidence type="ECO:0000305" key="7"/>
<evidence type="ECO:0000312" key="8">
    <source>
        <dbReference type="Araport" id="AT5G26670"/>
    </source>
</evidence>
<evidence type="ECO:0000312" key="9">
    <source>
        <dbReference type="EMBL" id="AAC13595.1"/>
    </source>
</evidence>
<comment type="function">
    <text evidence="1">Hydrolyzes acetyl esters in homogalacturonan regions of pectin. In type I primary cell wall, galacturonic acid residues of pectin can be acetylated at the O-2 and O-3 positions. Decreasing the degree of acetylation of pectin gels in vitro alters their physical properties.</text>
</comment>
<comment type="subcellular location">
    <subcellularLocation>
        <location evidence="7">Secreted</location>
        <location evidence="7">Cell wall</location>
    </subcellularLocation>
</comment>
<comment type="alternative products">
    <event type="alternative splicing"/>
    <isoform>
        <id>Q66GM8-1</id>
        <name>1</name>
        <sequence type="displayed"/>
    </isoform>
    <isoform>
        <id>Q66GM8-2</id>
        <name>2</name>
        <sequence type="described" ref="VSP_057379"/>
    </isoform>
</comment>
<comment type="disruption phenotype">
    <text evidence="5">No visible phenotype under normal growth conditions.</text>
</comment>
<comment type="similarity">
    <text evidence="7">Belongs to the pectinacetylesterase family.</text>
</comment>
<comment type="sequence caution" evidence="7">
    <conflict type="erroneous gene model prediction">
        <sequence resource="EMBL-CDS" id="AAC13595"/>
    </conflict>
</comment>